<sequence length="789" mass="89188">MLTTGIFWMTVLISHIQERGIVGVEGQELVHPKKLPLLHKRDLERIHDSDIPEEYEEELLYEIKLGKKTLILHLLKAREFLSSNYSETYYNVKREVFTKHPQILDHCFYQGSIIHEFDSAASISTCNGLRGFFRVNDQRYLIEPVKYSDDGEHLVYKYNVKAPYATNHSCVGLNFTKKSALIDVENIEEHNAEDHHKEKFIELFVVADEYVYRRNNKPQNKLRKRIWGMVNFVNMIYKTLNIHVTLAGFEIWSAGDKIEIVSNLESTLLHFSTWQETVLKKRKDFDHVILLSGKWLYTSMQGIAYPGGICQILRSCSVVKDLLPDVNIIGNRMAHQLGHSLGMQHDGFPCTCPLGKCVMGDGSIPAIKFSKCSQTQYQQFLQDQKPACILNNPFPEEFNDYPFCGNKKVDEGEECDCGPVQECTNPCCDAHKCVLKPGFTCVEGECCESCQMKKEGAVCRLAKNECDISEVCTGYSPECPKDEFQANGFPCRNGEGYCFMGLCPTRNEQCSELFIGGAEESHSLCYRMNKKGNRFGYCKNKGNTFVPCEEKDLKCGKIYCSGGRPSSRLGEDKAYNLKNVKQNVTIKCRTMFLHHNSRDMGLVNSGTKCGDGMVCSNGECIEMEKAYNSTICSSPCDENDVDDNEPECQCEEGSIITEWGEALNLTSVSIMVIVLVMVIIGVGLVILLIRYQKCIKMKQVQSSPREIRGVENKGYFPEEHQTRSEPILTDIHPLHTTAESLERVPSSFSSPHYITLKSVSKDSRGIADPKQTDNVNLNLDTQSGCERLG</sequence>
<proteinExistence type="evidence at protein level"/>
<evidence type="ECO:0000250" key="1"/>
<evidence type="ECO:0000255" key="2"/>
<evidence type="ECO:0000255" key="3">
    <source>
        <dbReference type="PROSITE-ProRule" id="PRU00068"/>
    </source>
</evidence>
<evidence type="ECO:0000255" key="4">
    <source>
        <dbReference type="PROSITE-ProRule" id="PRU00276"/>
    </source>
</evidence>
<evidence type="ECO:0000256" key="5">
    <source>
        <dbReference type="SAM" id="MobiDB-lite"/>
    </source>
</evidence>
<evidence type="ECO:0000269" key="6">
    <source>
    </source>
</evidence>
<evidence type="ECO:0000269" key="7">
    <source>
    </source>
</evidence>
<evidence type="ECO:0000269" key="8">
    <source>
    </source>
</evidence>
<evidence type="ECO:0000305" key="9"/>
<evidence type="ECO:0000305" key="10">
    <source>
    </source>
</evidence>
<evidence type="ECO:0000305" key="11">
    <source>
    </source>
</evidence>
<evidence type="ECO:0000312" key="12">
    <source>
        <dbReference type="MGI" id="MGI:107247"/>
    </source>
</evidence>
<name>ADAM7_MOUSE</name>
<keyword id="KW-1015">Disulfide bond</keyword>
<keyword id="KW-0325">Glycoprotein</keyword>
<keyword id="KW-0472">Membrane</keyword>
<keyword id="KW-1185">Reference proteome</keyword>
<keyword id="KW-0732">Signal</keyword>
<keyword id="KW-0812">Transmembrane</keyword>
<keyword id="KW-1133">Transmembrane helix</keyword>
<feature type="signal peptide" evidence="2">
    <location>
        <begin position="1"/>
        <end position="23"/>
    </location>
</feature>
<feature type="propeptide" id="PRO_0000419681" evidence="1">
    <location>
        <begin position="24"/>
        <end position="176"/>
    </location>
</feature>
<feature type="chain" id="PRO_0000029056" description="Disintegrin and metalloproteinase domain-containing protein 7">
    <location>
        <begin position="177"/>
        <end position="789"/>
    </location>
</feature>
<feature type="topological domain" description="Extracellular" evidence="2">
    <location>
        <begin position="24"/>
        <end position="667"/>
    </location>
</feature>
<feature type="transmembrane region" description="Helical" evidence="2">
    <location>
        <begin position="668"/>
        <end position="689"/>
    </location>
</feature>
<feature type="topological domain" description="Cytoplasmic" evidence="2">
    <location>
        <begin position="690"/>
        <end position="789"/>
    </location>
</feature>
<feature type="domain" description="Peptidase M12B" evidence="4">
    <location>
        <begin position="199"/>
        <end position="393"/>
    </location>
</feature>
<feature type="domain" description="Disintegrin" evidence="3">
    <location>
        <begin position="401"/>
        <end position="487"/>
    </location>
</feature>
<feature type="region of interest" description="Disordered" evidence="5">
    <location>
        <begin position="764"/>
        <end position="789"/>
    </location>
</feature>
<feature type="compositionally biased region" description="Polar residues" evidence="5">
    <location>
        <begin position="772"/>
        <end position="789"/>
    </location>
</feature>
<feature type="glycosylation site" description="N-linked (GlcNAc...) asparagine" evidence="2">
    <location>
        <position position="84"/>
    </location>
</feature>
<feature type="glycosylation site" description="N-linked (GlcNAc...) asparagine" evidence="2">
    <location>
        <position position="167"/>
    </location>
</feature>
<feature type="glycosylation site" description="N-linked (GlcNAc...) asparagine" evidence="2">
    <location>
        <position position="174"/>
    </location>
</feature>
<feature type="glycosylation site" description="N-linked (GlcNAc...) asparagine" evidence="2">
    <location>
        <position position="583"/>
    </location>
</feature>
<feature type="glycosylation site" description="N-linked (GlcNAc...) asparagine" evidence="2">
    <location>
        <position position="628"/>
    </location>
</feature>
<feature type="glycosylation site" description="N-linked (GlcNAc...) asparagine" evidence="2">
    <location>
        <position position="664"/>
    </location>
</feature>
<feature type="disulfide bond" evidence="1">
    <location>
        <begin position="310"/>
        <end position="388"/>
    </location>
</feature>
<feature type="disulfide bond" evidence="1">
    <location>
        <begin position="350"/>
        <end position="372"/>
    </location>
</feature>
<feature type="disulfide bond" evidence="1">
    <location>
        <begin position="352"/>
        <end position="357"/>
    </location>
</feature>
<feature type="disulfide bond" evidence="1">
    <location>
        <begin position="459"/>
        <end position="479"/>
    </location>
</feature>
<feature type="sequence conflict" description="In Ref. 1; AAC53368." evidence="9" ref="1">
    <original>LT</original>
    <variation>FP</variation>
    <location>
        <begin position="2"/>
        <end position="3"/>
    </location>
</feature>
<feature type="sequence conflict" description="In Ref. 1; AAC53368." evidence="9" ref="1">
    <original>W</original>
    <variation>L</variation>
    <location>
        <position position="8"/>
    </location>
</feature>
<feature type="sequence conflict" description="In Ref. 1; AAC53368." evidence="9" ref="1">
    <original>E</original>
    <variation>Q</variation>
    <location>
        <position position="28"/>
    </location>
</feature>
<feature type="sequence conflict" description="In Ref. 1; AAC53368." evidence="9" ref="1">
    <original>V</original>
    <variation>M</variation>
    <location>
        <position position="155"/>
    </location>
</feature>
<feature type="sequence conflict" description="In Ref. 1; AAC53368." evidence="9" ref="1">
    <original>KR</original>
    <variation>NG</variation>
    <location>
        <begin position="224"/>
        <end position="225"/>
    </location>
</feature>
<feature type="sequence conflict" description="In Ref. 1; AAC53368." evidence="9" ref="1">
    <original>S</original>
    <variation>L</variation>
    <location>
        <position position="253"/>
    </location>
</feature>
<feature type="sequence conflict" description="In Ref. 1; AAC53368." evidence="9" ref="1">
    <original>E</original>
    <variation>K</variation>
    <location>
        <position position="397"/>
    </location>
</feature>
<feature type="sequence conflict" description="In Ref. 1; AAC53368." evidence="9" ref="1">
    <original>E</original>
    <variation>K</variation>
    <location>
        <position position="414"/>
    </location>
</feature>
<feature type="sequence conflict" description="In Ref. 1; AAC53368." evidence="9" ref="1">
    <original>E</original>
    <variation>K</variation>
    <location>
        <position position="495"/>
    </location>
</feature>
<feature type="sequence conflict" description="In Ref. 1; AAC53368." evidence="9" ref="1">
    <original>DKA</original>
    <variation>NKT</variation>
    <location>
        <begin position="572"/>
        <end position="574"/>
    </location>
</feature>
<feature type="sequence conflict" description="In Ref. 1; AAC53368." evidence="9" ref="1">
    <location>
        <position position="679"/>
    </location>
</feature>
<reference key="1">
    <citation type="journal article" date="1997" name="Endocrinology">
        <title>ADAM7, a member of the ADAM (A Disintegrin And Metalloprotease) gene family is specifically expressed in the mouse anterior pituitary and epididymis.</title>
        <authorList>
            <person name="Cornwall G.A."/>
            <person name="Hsia N."/>
        </authorList>
    </citation>
    <scope>NUCLEOTIDE SEQUENCE [MRNA]</scope>
    <scope>TISSUE SPECIFICITY</scope>
    <scope>INDUCTION BY TESTIS FACTORS AND TESTOSTERONE</scope>
    <source>
        <strain>C57BL/6J</strain>
        <tissue>Epididymis</tissue>
    </source>
</reference>
<reference key="2">
    <citation type="journal article" date="2009" name="PLoS Biol.">
        <title>Lineage-specific biology revealed by a finished genome assembly of the mouse.</title>
        <authorList>
            <person name="Church D.M."/>
            <person name="Goodstadt L."/>
            <person name="Hillier L.W."/>
            <person name="Zody M.C."/>
            <person name="Goldstein S."/>
            <person name="She X."/>
            <person name="Bult C.J."/>
            <person name="Agarwala R."/>
            <person name="Cherry J.L."/>
            <person name="DiCuccio M."/>
            <person name="Hlavina W."/>
            <person name="Kapustin Y."/>
            <person name="Meric P."/>
            <person name="Maglott D."/>
            <person name="Birtle Z."/>
            <person name="Marques A.C."/>
            <person name="Graves T."/>
            <person name="Zhou S."/>
            <person name="Teague B."/>
            <person name="Potamousis K."/>
            <person name="Churas C."/>
            <person name="Place M."/>
            <person name="Herschleb J."/>
            <person name="Runnheim R."/>
            <person name="Forrest D."/>
            <person name="Amos-Landgraf J."/>
            <person name="Schwartz D.C."/>
            <person name="Cheng Z."/>
            <person name="Lindblad-Toh K."/>
            <person name="Eichler E.E."/>
            <person name="Ponting C.P."/>
        </authorList>
    </citation>
    <scope>NUCLEOTIDE SEQUENCE [LARGE SCALE GENOMIC DNA]</scope>
    <source>
        <strain>C57BL/6J</strain>
    </source>
</reference>
<reference key="3">
    <citation type="journal article" date="2011" name="J. Cell. Physiol.">
        <title>Identification of heat shock protein 5, calnexin and integral membrane protein 2B as Adam7-interacting membrane proteins in mouse sperm.</title>
        <authorList>
            <person name="Han C."/>
            <person name="Park I."/>
            <person name="Lee B."/>
            <person name="Jin S."/>
            <person name="Choi H."/>
            <person name="Kwon J.T."/>
            <person name="Kwon Y.I."/>
            <person name="Kim D.H."/>
            <person name="Park Z.Y."/>
            <person name="Cho C."/>
        </authorList>
    </citation>
    <scope>INTERACTION WITH ITM2B; HSPA5 AND CANX</scope>
    <scope>TISSUE SPECIFICITY</scope>
</reference>
<reference key="4">
    <citation type="journal article" date="2015" name="Biol. Reprod.">
        <title>Reduced Fertility and Altered Epididymal and Sperm Integrity in Mice Lacking ADAM7.</title>
        <authorList>
            <person name="Choi H."/>
            <person name="Han C."/>
            <person name="Jin S."/>
            <person name="Kwon J.T."/>
            <person name="Kim J."/>
            <person name="Jeong J."/>
            <person name="Kim J."/>
            <person name="Ham S."/>
            <person name="Jeon S."/>
            <person name="Yoo Y.J."/>
            <person name="Cho C."/>
        </authorList>
    </citation>
    <scope>FUNCTION</scope>
    <scope>TISSUE SPECIFICITY</scope>
    <scope>DISRUPTION PHENOTYPE</scope>
</reference>
<organism>
    <name type="scientific">Mus musculus</name>
    <name type="common">Mouse</name>
    <dbReference type="NCBI Taxonomy" id="10090"/>
    <lineage>
        <taxon>Eukaryota</taxon>
        <taxon>Metazoa</taxon>
        <taxon>Chordata</taxon>
        <taxon>Craniata</taxon>
        <taxon>Vertebrata</taxon>
        <taxon>Euteleostomi</taxon>
        <taxon>Mammalia</taxon>
        <taxon>Eutheria</taxon>
        <taxon>Euarchontoglires</taxon>
        <taxon>Glires</taxon>
        <taxon>Rodentia</taxon>
        <taxon>Myomorpha</taxon>
        <taxon>Muroidea</taxon>
        <taxon>Muridae</taxon>
        <taxon>Murinae</taxon>
        <taxon>Mus</taxon>
        <taxon>Mus</taxon>
    </lineage>
</organism>
<comment type="function">
    <text evidence="7 11">Required for normal male fertility via maintenance of epithelial cell morphology in the caput epididymis and subsequently correct epididymis lumen structure required for sperm development (PubMed:26246218). Plays a role in sperm motility, flagella morphology and tyrosine phosphorylation during sperm capacitance (PubMed:26246218). Plays a role in normal expression levels of HSPA5, ITM2B and ADAM2 in sperm both prior to and post-capacitation (PubMed:26246218). This is a non catalytic metalloprotease-like protein (Probable).</text>
</comment>
<comment type="subunit">
    <text evidence="6">Interacts with ITM2B in sperm; the interaction increases following capacitation (PubMed:20945367). Interacts with HSPA5 and CANX (PubMed:20945367).</text>
</comment>
<comment type="subcellular location">
    <subcellularLocation>
        <location evidence="10">Membrane</location>
        <topology evidence="2">Single-pass type I membrane protein</topology>
    </subcellularLocation>
</comment>
<comment type="tissue specificity">
    <text evidence="6 7 8">Expressed in both the head and tails of sperm (at protein level) (PubMed:20945367, PubMed:26246218). Expressed in the epididymis (at protein level) (PubMed:26246218). Abundantly expressed in the apical region of the proximal caput epididymal epithelium, with decreasing expression in the mid and distal caput epididymal epithelium (PubMed:9322939).</text>
</comment>
<comment type="induction">
    <text evidence="8">Induced by testis factors and androgens including testosterone.</text>
</comment>
<comment type="disruption phenotype">
    <text evidence="7">As a result of decreased egg fertilization male knockout mice produce a 15% reduced litter size whereas female knockout mice are unaffected (PubMed:26246218). No difference in male gross organ morphology (PubMed:26246218). Reduced epithelial cell heights in the caput regions of the epididymis, resulting in increased circumferences of the epididymal lumina (PubMed:26246218). Infrequent histological abnormalities can be found in the caput epididymis, such as sperm granulomas and mineralization-like features (PubMed:26246218). Increased frequency of intraepithelial vacuoles and hyperplasia found in the cauda epididymis (PubMed:26246218). Sperm obtained from the uterus of mated females show morphologically abnormal flagella with repeated bending and zigzag patterns (PubMed:26246218). Sperm incubated in vitro show reduced motility and abnormal flagella, additionally they show a reduction in overall levels of protein phosphotyrosine levels independent of capacitation state, resulting in an overall reduction in fertilization rate of 60% (PubMed:26246218). Decrease in protein levels of HSPA5 and ITM2B in both uncapacitated and capacitated sperm, and reduction in the levels of ADAM2 in capacitated sperm (PubMed:26246218).</text>
</comment>
<dbReference type="EMBL" id="AF013107">
    <property type="protein sequence ID" value="AAC53368.1"/>
    <property type="molecule type" value="mRNA"/>
</dbReference>
<dbReference type="EMBL" id="AC154706">
    <property type="status" value="NOT_ANNOTATED_CDS"/>
    <property type="molecule type" value="Genomic_DNA"/>
</dbReference>
<dbReference type="CCDS" id="CCDS27234.1"/>
<dbReference type="RefSeq" id="NP_031428.2">
    <property type="nucleotide sequence ID" value="NM_007402.2"/>
</dbReference>
<dbReference type="SMR" id="O35227"/>
<dbReference type="BioGRID" id="197971">
    <property type="interactions" value="9"/>
</dbReference>
<dbReference type="FunCoup" id="O35227">
    <property type="interactions" value="7"/>
</dbReference>
<dbReference type="STRING" id="10090.ENSMUSP00000022640"/>
<dbReference type="MEROPS" id="M12.956"/>
<dbReference type="GlyCosmos" id="O35227">
    <property type="glycosylation" value="6 sites, No reported glycans"/>
</dbReference>
<dbReference type="GlyGen" id="O35227">
    <property type="glycosylation" value="6 sites"/>
</dbReference>
<dbReference type="PhosphoSitePlus" id="O35227"/>
<dbReference type="PaxDb" id="10090-ENSMUSP00000022640"/>
<dbReference type="ProteomicsDB" id="281937"/>
<dbReference type="Antibodypedia" id="22842">
    <property type="antibodies" value="81 antibodies from 22 providers"/>
</dbReference>
<dbReference type="DNASU" id="11500"/>
<dbReference type="Ensembl" id="ENSMUST00000022640.8">
    <property type="protein sequence ID" value="ENSMUSP00000022640.8"/>
    <property type="gene ID" value="ENSMUSG00000022056.10"/>
</dbReference>
<dbReference type="GeneID" id="11500"/>
<dbReference type="KEGG" id="mmu:11500"/>
<dbReference type="UCSC" id="uc007ulr.1">
    <property type="organism name" value="mouse"/>
</dbReference>
<dbReference type="AGR" id="MGI:107247"/>
<dbReference type="CTD" id="8756"/>
<dbReference type="MGI" id="MGI:107247">
    <property type="gene designation" value="Adam7"/>
</dbReference>
<dbReference type="VEuPathDB" id="HostDB:ENSMUSG00000022056"/>
<dbReference type="eggNOG" id="KOG3607">
    <property type="taxonomic scope" value="Eukaryota"/>
</dbReference>
<dbReference type="GeneTree" id="ENSGT00940000161406"/>
<dbReference type="HOGENOM" id="CLU_012714_6_0_1"/>
<dbReference type="InParanoid" id="O35227"/>
<dbReference type="OMA" id="RFSTWQE"/>
<dbReference type="OrthoDB" id="5951731at2759"/>
<dbReference type="PhylomeDB" id="O35227"/>
<dbReference type="TreeFam" id="TF314733"/>
<dbReference type="BioGRID-ORCS" id="11500">
    <property type="hits" value="1 hit in 77 CRISPR screens"/>
</dbReference>
<dbReference type="PRO" id="PR:O35227"/>
<dbReference type="Proteomes" id="UP000000589">
    <property type="component" value="Chromosome 14"/>
</dbReference>
<dbReference type="RNAct" id="O35227">
    <property type="molecule type" value="protein"/>
</dbReference>
<dbReference type="Bgee" id="ENSMUSG00000022056">
    <property type="expression patterns" value="Expressed in animal zygote and 20 other cell types or tissues"/>
</dbReference>
<dbReference type="GO" id="GO:0009986">
    <property type="term" value="C:cell surface"/>
    <property type="evidence" value="ECO:0000314"/>
    <property type="project" value="MGI"/>
</dbReference>
<dbReference type="GO" id="GO:0005886">
    <property type="term" value="C:plasma membrane"/>
    <property type="evidence" value="ECO:0000314"/>
    <property type="project" value="MGI"/>
</dbReference>
<dbReference type="GO" id="GO:0004175">
    <property type="term" value="F:endopeptidase activity"/>
    <property type="evidence" value="ECO:0000314"/>
    <property type="project" value="MGI"/>
</dbReference>
<dbReference type="GO" id="GO:0004222">
    <property type="term" value="F:metalloendopeptidase activity"/>
    <property type="evidence" value="ECO:0007669"/>
    <property type="project" value="InterPro"/>
</dbReference>
<dbReference type="GO" id="GO:1905867">
    <property type="term" value="P:epididymis development"/>
    <property type="evidence" value="ECO:0000315"/>
    <property type="project" value="UniProtKB"/>
</dbReference>
<dbReference type="GO" id="GO:0003382">
    <property type="term" value="P:epithelial cell morphogenesis"/>
    <property type="evidence" value="ECO:0000315"/>
    <property type="project" value="UniProtKB"/>
</dbReference>
<dbReference type="GO" id="GO:1902093">
    <property type="term" value="P:positive regulation of flagellated sperm motility"/>
    <property type="evidence" value="ECO:0000315"/>
    <property type="project" value="UniProtKB"/>
</dbReference>
<dbReference type="GO" id="GO:1902492">
    <property type="term" value="P:positive regulation of sperm capacitation"/>
    <property type="evidence" value="ECO:0000315"/>
    <property type="project" value="UniProtKB"/>
</dbReference>
<dbReference type="GO" id="GO:0006508">
    <property type="term" value="P:proteolysis"/>
    <property type="evidence" value="ECO:0007669"/>
    <property type="project" value="InterPro"/>
</dbReference>
<dbReference type="CDD" id="cd04269">
    <property type="entry name" value="ZnMc_adamalysin_II_like"/>
    <property type="match status" value="1"/>
</dbReference>
<dbReference type="FunFam" id="3.40.390.10:FF:000002">
    <property type="entry name" value="Disintegrin and metalloproteinase domain-containing protein 22"/>
    <property type="match status" value="1"/>
</dbReference>
<dbReference type="FunFam" id="4.10.70.10:FF:000001">
    <property type="entry name" value="Disintegrin and metalloproteinase domain-containing protein 22"/>
    <property type="match status" value="1"/>
</dbReference>
<dbReference type="Gene3D" id="3.40.390.10">
    <property type="entry name" value="Collagenase (Catalytic Domain)"/>
    <property type="match status" value="1"/>
</dbReference>
<dbReference type="Gene3D" id="4.10.70.10">
    <property type="entry name" value="Disintegrin domain"/>
    <property type="match status" value="1"/>
</dbReference>
<dbReference type="InterPro" id="IPR006586">
    <property type="entry name" value="ADAM_Cys-rich"/>
</dbReference>
<dbReference type="InterPro" id="IPR018358">
    <property type="entry name" value="Disintegrin_CS"/>
</dbReference>
<dbReference type="InterPro" id="IPR001762">
    <property type="entry name" value="Disintegrin_dom"/>
</dbReference>
<dbReference type="InterPro" id="IPR036436">
    <property type="entry name" value="Disintegrin_dom_sf"/>
</dbReference>
<dbReference type="InterPro" id="IPR024079">
    <property type="entry name" value="MetalloPept_cat_dom_sf"/>
</dbReference>
<dbReference type="InterPro" id="IPR001590">
    <property type="entry name" value="Peptidase_M12B"/>
</dbReference>
<dbReference type="InterPro" id="IPR002870">
    <property type="entry name" value="Peptidase_M12B_N"/>
</dbReference>
<dbReference type="InterPro" id="IPR034027">
    <property type="entry name" value="Reprolysin_adamalysin"/>
</dbReference>
<dbReference type="PANTHER" id="PTHR11905">
    <property type="entry name" value="ADAM A DISINTEGRIN AND METALLOPROTEASE DOMAIN"/>
    <property type="match status" value="1"/>
</dbReference>
<dbReference type="PANTHER" id="PTHR11905:SF21">
    <property type="entry name" value="DISINTEGRIN AND METALLOPROTEINASE DOMAIN-CONTAINING PROTEIN 7"/>
    <property type="match status" value="1"/>
</dbReference>
<dbReference type="Pfam" id="PF08516">
    <property type="entry name" value="ADAM_CR"/>
    <property type="match status" value="1"/>
</dbReference>
<dbReference type="Pfam" id="PF00200">
    <property type="entry name" value="Disintegrin"/>
    <property type="match status" value="1"/>
</dbReference>
<dbReference type="Pfam" id="PF01562">
    <property type="entry name" value="Pep_M12B_propep"/>
    <property type="match status" value="1"/>
</dbReference>
<dbReference type="Pfam" id="PF01421">
    <property type="entry name" value="Reprolysin"/>
    <property type="match status" value="1"/>
</dbReference>
<dbReference type="PRINTS" id="PR00289">
    <property type="entry name" value="DISINTEGRIN"/>
</dbReference>
<dbReference type="SMART" id="SM00608">
    <property type="entry name" value="ACR"/>
    <property type="match status" value="1"/>
</dbReference>
<dbReference type="SMART" id="SM00050">
    <property type="entry name" value="DISIN"/>
    <property type="match status" value="1"/>
</dbReference>
<dbReference type="SUPFAM" id="SSF57552">
    <property type="entry name" value="Blood coagulation inhibitor (disintegrin)"/>
    <property type="match status" value="1"/>
</dbReference>
<dbReference type="SUPFAM" id="SSF55486">
    <property type="entry name" value="Metalloproteases ('zincins'), catalytic domain"/>
    <property type="match status" value="1"/>
</dbReference>
<dbReference type="PROSITE" id="PS50215">
    <property type="entry name" value="ADAM_MEPRO"/>
    <property type="match status" value="1"/>
</dbReference>
<dbReference type="PROSITE" id="PS00427">
    <property type="entry name" value="DISINTEGRIN_1"/>
    <property type="match status" value="1"/>
</dbReference>
<dbReference type="PROSITE" id="PS50214">
    <property type="entry name" value="DISINTEGRIN_2"/>
    <property type="match status" value="1"/>
</dbReference>
<gene>
    <name evidence="12" type="primary">Adam7</name>
</gene>
<accession>O35227</accession>
<accession>F8VQC6</accession>
<protein>
    <recommendedName>
        <fullName evidence="12">Disintegrin and metalloproteinase domain-containing protein 7</fullName>
        <shortName>ADAM 7</shortName>
    </recommendedName>
</protein>